<organismHost>
    <name type="scientific">Aves</name>
    <dbReference type="NCBI Taxonomy" id="8782"/>
</organismHost>
<organismHost>
    <name type="scientific">Homo sapiens</name>
    <name type="common">Human</name>
    <dbReference type="NCBI Taxonomy" id="9606"/>
</organismHost>
<organismHost>
    <name type="scientific">Sus scrofa</name>
    <name type="common">Pig</name>
    <dbReference type="NCBI Taxonomy" id="9823"/>
</organismHost>
<organism>
    <name type="scientific">Influenza A virus (strain A/Henry/1936 H1N1)</name>
    <dbReference type="NCBI Taxonomy" id="425562"/>
    <lineage>
        <taxon>Viruses</taxon>
        <taxon>Riboviria</taxon>
        <taxon>Orthornavirae</taxon>
        <taxon>Negarnaviricota</taxon>
        <taxon>Polyploviricotina</taxon>
        <taxon>Insthoviricetes</taxon>
        <taxon>Articulavirales</taxon>
        <taxon>Orthomyxoviridae</taxon>
        <taxon>Alphainfluenzavirus</taxon>
        <taxon>Alphainfluenzavirus influenzae</taxon>
        <taxon>Influenza A virus</taxon>
    </lineage>
</organism>
<sequence length="90" mass="10706">MGQEQDTPWILSTGHISTQKGEDGQQTPKLEHCNSTRLMGHCQKTMNQVVMPKQIVYWKQWLSLRNPILVFLKTRVLKRWRLFSKHEWTS</sequence>
<comment type="function">
    <text evidence="1">Plays an important role in promoting lung pathology in both primary viral infection and secondary bacterial infection. Promotes alteration of mitochondrial morphology, dissipation of mitochondrial membrane potential, and cell death. Alternatively, inhibits the production of interferon in the infected cell at the level of host mitochondrial antiviral signaling MAVS. Its level of expression differs greatly depending on which cell type is infected, in a manner that is independent of the levels of expression of other viral proteins. Monocytic cells are more affected than epithelial cells. Seems to disable virus-infected monocytes or other host innate immune cells. During early stage of infection, predisposes the mitochondria to permeability transition through interaction with host SLC25A6/ANT3 and VDAC1. These proteins participate in the formation of the permeability transition pore complex (PTPC) responsible of the release of mitochondrial products that triggers apoptosis.</text>
</comment>
<comment type="subunit">
    <text evidence="1">Oligomer. Interacts with human SLC25A6/ANT3 and VDAC1. Interacts with host MAVS.</text>
</comment>
<comment type="subcellular location">
    <subcellularLocation>
        <location evidence="1">Host mitochondrion inner membrane</location>
    </subcellularLocation>
    <subcellularLocation>
        <location evidence="1">Host nucleus</location>
    </subcellularLocation>
    <subcellularLocation>
        <location evidence="1">Host cytoplasm</location>
        <location evidence="1">Host cytosol</location>
    </subcellularLocation>
    <text evidence="1">Inner mitochondrial membrane in most cells types. Otherwise is detected in the nucleus and cytosol.</text>
</comment>
<comment type="miscellaneous">
    <text>Is not encoded in all strains, and seems to be dispensable for replication.</text>
</comment>
<comment type="similarity">
    <text evidence="1">Belongs to the influenza viruses PB1-F2 family.</text>
</comment>
<evidence type="ECO:0000255" key="1">
    <source>
        <dbReference type="HAMAP-Rule" id="MF_04064"/>
    </source>
</evidence>
<evidence type="ECO:0000256" key="2">
    <source>
        <dbReference type="SAM" id="MobiDB-lite"/>
    </source>
</evidence>
<keyword id="KW-0053">Apoptosis</keyword>
<keyword id="KW-1035">Host cytoplasm</keyword>
<keyword id="KW-1043">Host membrane</keyword>
<keyword id="KW-1045">Host mitochondrion</keyword>
<keyword id="KW-1046">Host mitochondrion inner membrane</keyword>
<keyword id="KW-1048">Host nucleus</keyword>
<keyword id="KW-0945">Host-virus interaction</keyword>
<keyword id="KW-1090">Inhibition of host innate immune response by virus</keyword>
<keyword id="KW-1097">Inhibition of host MAVS by virus</keyword>
<keyword id="KW-1113">Inhibition of host RLR pathway by virus</keyword>
<keyword id="KW-0472">Membrane</keyword>
<keyword id="KW-1119">Modulation of host cell apoptosis by virus</keyword>
<keyword id="KW-0899">Viral immunoevasion</keyword>
<reference key="1">
    <citation type="submission" date="2007-03" db="EMBL/GenBank/DDBJ databases">
        <title>The NIAID influenza genome sequencing project.</title>
        <authorList>
            <person name="Ghedin E."/>
            <person name="Spiro D."/>
            <person name="Miller N."/>
            <person name="Zaborsky J."/>
            <person name="Feldblyum T."/>
            <person name="Subbu V."/>
            <person name="Shumway M."/>
            <person name="Sparenborg J."/>
            <person name="Groveman L."/>
            <person name="Halpin R."/>
            <person name="Sitz J."/>
            <person name="Koo H."/>
            <person name="Salzberg S.L."/>
            <person name="Webster R.G."/>
            <person name="Hoffmann E."/>
            <person name="Krauss S."/>
            <person name="Naeve C."/>
            <person name="Bao Y."/>
            <person name="Bolotov P."/>
            <person name="Dernovoy D."/>
            <person name="Kiryutin B."/>
            <person name="Lipman D.J."/>
            <person name="Tatusova T."/>
        </authorList>
    </citation>
    <scope>NUCLEOTIDE SEQUENCE [GENOMIC RNA]</scope>
</reference>
<reference key="2">
    <citation type="submission" date="2007-03" db="EMBL/GenBank/DDBJ databases">
        <authorList>
            <consortium name="The NIAID Influenza Genome Sequencing Consortium"/>
        </authorList>
    </citation>
    <scope>NUCLEOTIDE SEQUENCE [GENOMIC RNA]</scope>
</reference>
<feature type="chain" id="PRO_0000373014" description="Protein PB1-F2">
    <location>
        <begin position="1"/>
        <end position="90"/>
    </location>
</feature>
<feature type="region of interest" description="Disordered" evidence="2">
    <location>
        <begin position="1"/>
        <end position="29"/>
    </location>
</feature>
<feature type="region of interest" description="Mitochondrial targeting sequence" evidence="1">
    <location>
        <begin position="65"/>
        <end position="87"/>
    </location>
</feature>
<feature type="compositionally biased region" description="Polar residues" evidence="2">
    <location>
        <begin position="14"/>
        <end position="28"/>
    </location>
</feature>
<feature type="site" description="Low pathogenicity" evidence="1">
    <location>
        <position position="66"/>
    </location>
</feature>
<protein>
    <recommendedName>
        <fullName evidence="1">Protein PB1-F2</fullName>
    </recommendedName>
</protein>
<gene>
    <name evidence="1" type="primary">PB1</name>
    <name type="synonym">PB1-F2</name>
</gene>
<dbReference type="EMBL" id="CY020451">
    <property type="protein sequence ID" value="ABO38360.1"/>
    <property type="molecule type" value="Viral_cRNA"/>
</dbReference>
<dbReference type="BMRB" id="A4GCJ5"/>
<dbReference type="SMR" id="A4GCJ5"/>
<dbReference type="Proteomes" id="UP000008213">
    <property type="component" value="Genome"/>
</dbReference>
<dbReference type="GO" id="GO:0044164">
    <property type="term" value="C:host cell cytosol"/>
    <property type="evidence" value="ECO:0007669"/>
    <property type="project" value="UniProtKB-SubCell"/>
</dbReference>
<dbReference type="GO" id="GO:0044192">
    <property type="term" value="C:host cell mitochondrial inner membrane"/>
    <property type="evidence" value="ECO:0007669"/>
    <property type="project" value="UniProtKB-SubCell"/>
</dbReference>
<dbReference type="GO" id="GO:0042025">
    <property type="term" value="C:host cell nucleus"/>
    <property type="evidence" value="ECO:0007669"/>
    <property type="project" value="UniProtKB-SubCell"/>
</dbReference>
<dbReference type="GO" id="GO:0016020">
    <property type="term" value="C:membrane"/>
    <property type="evidence" value="ECO:0007669"/>
    <property type="project" value="UniProtKB-UniRule"/>
</dbReference>
<dbReference type="GO" id="GO:0052150">
    <property type="term" value="P:symbiont-mediated perturbation of host apoptosis"/>
    <property type="evidence" value="ECO:0007669"/>
    <property type="project" value="UniProtKB-KW"/>
</dbReference>
<dbReference type="GO" id="GO:0039545">
    <property type="term" value="P:symbiont-mediated suppression of host cytoplasmic pattern recognition receptor signaling pathway via inhibition of MAVS activity"/>
    <property type="evidence" value="ECO:0000250"/>
    <property type="project" value="UniProtKB"/>
</dbReference>
<dbReference type="HAMAP" id="MF_04064">
    <property type="entry name" value="INFV_PB1F2"/>
    <property type="match status" value="1"/>
</dbReference>
<dbReference type="InterPro" id="IPR021045">
    <property type="entry name" value="Flu_proapoptotic_PB1-F2"/>
</dbReference>
<dbReference type="Pfam" id="PF11986">
    <property type="entry name" value="PB1-F2"/>
    <property type="match status" value="1"/>
</dbReference>
<proteinExistence type="inferred from homology"/>
<accession>A4GCJ5</accession>
<name>PB1F2_I36A0</name>